<feature type="chain" id="PRO_0000459476" description="NAD(P)H quinone oxidoreductase PST1">
    <location>
        <begin position="1"/>
        <end position="198"/>
    </location>
</feature>
<feature type="domain" description="Flavodoxin-like" evidence="1">
    <location>
        <begin position="6"/>
        <end position="192"/>
    </location>
</feature>
<feature type="binding site" evidence="1">
    <location>
        <begin position="12"/>
        <end position="16"/>
    </location>
    <ligand>
        <name>FMN</name>
        <dbReference type="ChEBI" id="CHEBI:58210"/>
    </ligand>
</feature>
<feature type="binding site" evidence="1">
    <location>
        <begin position="112"/>
        <end position="164"/>
    </location>
    <ligand>
        <name>FMN</name>
        <dbReference type="ChEBI" id="CHEBI:58210"/>
    </ligand>
</feature>
<name>PST1_CANAL</name>
<evidence type="ECO:0000255" key="1">
    <source>
        <dbReference type="PROSITE-ProRule" id="PRU00088"/>
    </source>
</evidence>
<evidence type="ECO:0000269" key="2">
    <source>
    </source>
</evidence>
<evidence type="ECO:0000269" key="3">
    <source>
    </source>
</evidence>
<evidence type="ECO:0000269" key="4">
    <source>
    </source>
</evidence>
<evidence type="ECO:0000269" key="5">
    <source>
    </source>
</evidence>
<evidence type="ECO:0000269" key="6">
    <source>
    </source>
</evidence>
<evidence type="ECO:0000303" key="7">
    <source>
    </source>
</evidence>
<evidence type="ECO:0000305" key="8"/>
<evidence type="ECO:0000305" key="9">
    <source>
    </source>
</evidence>
<organism>
    <name type="scientific">Candida albicans (strain SC5314 / ATCC MYA-2876)</name>
    <name type="common">Yeast</name>
    <dbReference type="NCBI Taxonomy" id="237561"/>
    <lineage>
        <taxon>Eukaryota</taxon>
        <taxon>Fungi</taxon>
        <taxon>Dikarya</taxon>
        <taxon>Ascomycota</taxon>
        <taxon>Saccharomycotina</taxon>
        <taxon>Pichiomycetes</taxon>
        <taxon>Debaryomycetaceae</taxon>
        <taxon>Candida/Lodderomyces clade</taxon>
        <taxon>Candida</taxon>
    </lineage>
</organism>
<dbReference type="EC" id="1.6.5.2" evidence="9"/>
<dbReference type="EMBL" id="CP017624">
    <property type="protein sequence ID" value="AOW27688.1"/>
    <property type="molecule type" value="Genomic_DNA"/>
</dbReference>
<dbReference type="RefSeq" id="XP_714832.2">
    <property type="nucleotide sequence ID" value="XM_709739.2"/>
</dbReference>
<dbReference type="SMR" id="A0A1D8PHR5"/>
<dbReference type="STRING" id="237561.A0A1D8PHR5"/>
<dbReference type="EnsemblFungi" id="C2_06870C_A-T">
    <property type="protein sequence ID" value="C2_06870C_A-T-p1"/>
    <property type="gene ID" value="C2_06870C_A"/>
</dbReference>
<dbReference type="GeneID" id="3643520"/>
<dbReference type="KEGG" id="cal:CAALFM_C206870CA"/>
<dbReference type="CGD" id="CAL0000197194">
    <property type="gene designation" value="PST1"/>
</dbReference>
<dbReference type="VEuPathDB" id="FungiDB:C2_06870C_A"/>
<dbReference type="eggNOG" id="KOG3135">
    <property type="taxonomic scope" value="Eukaryota"/>
</dbReference>
<dbReference type="InParanoid" id="A0A1D8PHR5"/>
<dbReference type="OrthoDB" id="504689at2759"/>
<dbReference type="Proteomes" id="UP000000559">
    <property type="component" value="Chromosome 2"/>
</dbReference>
<dbReference type="GO" id="GO:0016020">
    <property type="term" value="C:membrane"/>
    <property type="evidence" value="ECO:0000318"/>
    <property type="project" value="GO_Central"/>
</dbReference>
<dbReference type="GO" id="GO:0005886">
    <property type="term" value="C:plasma membrane"/>
    <property type="evidence" value="ECO:0000314"/>
    <property type="project" value="CGD"/>
</dbReference>
<dbReference type="GO" id="GO:0010181">
    <property type="term" value="F:FMN binding"/>
    <property type="evidence" value="ECO:0007669"/>
    <property type="project" value="InterPro"/>
</dbReference>
<dbReference type="GO" id="GO:0003955">
    <property type="term" value="F:NAD(P)H dehydrogenase (quinone) activity"/>
    <property type="evidence" value="ECO:0000318"/>
    <property type="project" value="GO_Central"/>
</dbReference>
<dbReference type="GO" id="GO:0016655">
    <property type="term" value="F:oxidoreductase activity, acting on NAD(P)H, quinone or similar compound as acceptor"/>
    <property type="evidence" value="ECO:0000303"/>
    <property type="project" value="CGD"/>
</dbReference>
<dbReference type="GO" id="GO:0034599">
    <property type="term" value="P:cellular response to oxidative stress"/>
    <property type="evidence" value="ECO:0000316"/>
    <property type="project" value="CGD"/>
</dbReference>
<dbReference type="FunFam" id="3.40.50.360:FF:000001">
    <property type="entry name" value="NAD(P)H dehydrogenase (Quinone) FQR1-like"/>
    <property type="match status" value="1"/>
</dbReference>
<dbReference type="Gene3D" id="3.40.50.360">
    <property type="match status" value="1"/>
</dbReference>
<dbReference type="InterPro" id="IPR008254">
    <property type="entry name" value="Flavodoxin/NO_synth"/>
</dbReference>
<dbReference type="InterPro" id="IPR029039">
    <property type="entry name" value="Flavoprotein-like_sf"/>
</dbReference>
<dbReference type="InterPro" id="IPR010089">
    <property type="entry name" value="Flavoprotein_WrbA-like"/>
</dbReference>
<dbReference type="InterPro" id="IPR005025">
    <property type="entry name" value="FMN_Rdtase-like_dom"/>
</dbReference>
<dbReference type="NCBIfam" id="TIGR01755">
    <property type="entry name" value="flav_wrbA"/>
    <property type="match status" value="1"/>
</dbReference>
<dbReference type="NCBIfam" id="NF002999">
    <property type="entry name" value="PRK03767.1"/>
    <property type="match status" value="1"/>
</dbReference>
<dbReference type="PANTHER" id="PTHR30546">
    <property type="entry name" value="FLAVODOXIN-RELATED PROTEIN WRBA-RELATED"/>
    <property type="match status" value="1"/>
</dbReference>
<dbReference type="PANTHER" id="PTHR30546:SF23">
    <property type="entry name" value="FLAVOPROTEIN-LIKE PROTEIN YCP4-RELATED"/>
    <property type="match status" value="1"/>
</dbReference>
<dbReference type="Pfam" id="PF03358">
    <property type="entry name" value="FMN_red"/>
    <property type="match status" value="1"/>
</dbReference>
<dbReference type="SUPFAM" id="SSF52218">
    <property type="entry name" value="Flavoproteins"/>
    <property type="match status" value="1"/>
</dbReference>
<dbReference type="PROSITE" id="PS50902">
    <property type="entry name" value="FLAVODOXIN_LIKE"/>
    <property type="match status" value="1"/>
</dbReference>
<sequence length="198" mass="21311">MAQGKVAIIIYSLYHHVYDLALAEKAGIEAAGGVADIYQVAETLSDDVLAKMHAPAKPDIPIATHETLTQYDAFLFGIPTRFGNFPAQIKAFWDRTGGLWAKNALRGKYAGVFVWTGTPGGGQETTIINSLSTLAHHGIIYVPFGYGYPGMTDLEEVHGGSPWGAGTFASGNGSRKVTDLEKAIAKQQGEDFFKTVFK</sequence>
<keyword id="KW-1003">Cell membrane</keyword>
<keyword id="KW-0285">Flavoprotein</keyword>
<keyword id="KW-0288">FMN</keyword>
<keyword id="KW-0472">Membrane</keyword>
<keyword id="KW-0520">NAD</keyword>
<keyword id="KW-0547">Nucleotide-binding</keyword>
<keyword id="KW-0560">Oxidoreductase</keyword>
<keyword id="KW-1185">Reference proteome</keyword>
<keyword id="KW-0843">Virulence</keyword>
<proteinExistence type="evidence at transcript level"/>
<comment type="function">
    <text evidence="6">Flavodoxin-like protein (FLP) that plays a role in cell wall integrity, oxidative stress protection and virulence (PubMed:26325183). FLPs act as NAD(P)H quinone oxidoreductases (PubMed:26325183). Reduces ubiquinone (coenzyme Q), enabling it to serve as an antioxidant in the membrane (PubMed:26325183).</text>
</comment>
<comment type="catalytic activity">
    <reaction evidence="9">
        <text>a quinone + NADH + H(+) = a quinol + NAD(+)</text>
        <dbReference type="Rhea" id="RHEA:46160"/>
        <dbReference type="ChEBI" id="CHEBI:15378"/>
        <dbReference type="ChEBI" id="CHEBI:24646"/>
        <dbReference type="ChEBI" id="CHEBI:57540"/>
        <dbReference type="ChEBI" id="CHEBI:57945"/>
        <dbReference type="ChEBI" id="CHEBI:132124"/>
        <dbReference type="EC" id="1.6.5.2"/>
    </reaction>
</comment>
<comment type="catalytic activity">
    <reaction evidence="9">
        <text>a quinone + NADPH + H(+) = a quinol + NADP(+)</text>
        <dbReference type="Rhea" id="RHEA:46164"/>
        <dbReference type="ChEBI" id="CHEBI:15378"/>
        <dbReference type="ChEBI" id="CHEBI:24646"/>
        <dbReference type="ChEBI" id="CHEBI:57783"/>
        <dbReference type="ChEBI" id="CHEBI:58349"/>
        <dbReference type="ChEBI" id="CHEBI:132124"/>
        <dbReference type="EC" id="1.6.5.2"/>
    </reaction>
</comment>
<comment type="cofactor">
    <cofactor evidence="1">
        <name>FMN</name>
        <dbReference type="ChEBI" id="CHEBI:58210"/>
    </cofactor>
</comment>
<comment type="subcellular location">
    <subcellularLocation>
        <location evidence="6">Cell membrane</location>
        <topology evidence="6">Peripheral membrane protein</topology>
    </subcellularLocation>
</comment>
<comment type="induction">
    <text evidence="2 3 4 5">Expression is induced during filamentous growth and biofilm formation (PubMed:15814840, PubMed:22265407). Expression is regulated by many factors including CYR1, RAS11, EFG11, NRG11, RFQ1, TUP1 and CAP2/HAP43 (PubMed:15269278, PubMed:21592964).</text>
</comment>
<comment type="disruption phenotype">
    <text evidence="6">Quadruple mutant lacking all four FLPs (PST1, PST2, PST3 and YCP4) is more sensitive to benzoquinone and linolenic acid, a polyunsaturated fatty acid that can auto-oxidize and promote lipid peroxidation (PubMed:26325183). The quadruple mutant is also avirulent in a mouse model of systemic candidiasis (PubMed:26325183).</text>
</comment>
<comment type="similarity">
    <text evidence="8">Belongs to the WrbA family.</text>
</comment>
<gene>
    <name evidence="7" type="primary">PST1</name>
    <name type="ordered locus">CAALFM_C206870CA</name>
    <name type="ordered locus">orf19.2241</name>
</gene>
<accession>A0A1D8PHR5</accession>
<protein>
    <recommendedName>
        <fullName evidence="7">NAD(P)H quinone oxidoreductase PST1</fullName>
        <ecNumber evidence="9">1.6.5.2</ecNumber>
    </recommendedName>
    <alternativeName>
        <fullName evidence="7">Flavodoxin-like protein PST1</fullName>
        <shortName evidence="7">FLP PST1</shortName>
    </alternativeName>
</protein>
<reference key="1">
    <citation type="journal article" date="2004" name="Proc. Natl. Acad. Sci. U.S.A.">
        <title>The diploid genome sequence of Candida albicans.</title>
        <authorList>
            <person name="Jones T."/>
            <person name="Federspiel N.A."/>
            <person name="Chibana H."/>
            <person name="Dungan J."/>
            <person name="Kalman S."/>
            <person name="Magee B.B."/>
            <person name="Newport G."/>
            <person name="Thorstenson Y.R."/>
            <person name="Agabian N."/>
            <person name="Magee P.T."/>
            <person name="Davis R.W."/>
            <person name="Scherer S."/>
        </authorList>
    </citation>
    <scope>NUCLEOTIDE SEQUENCE [LARGE SCALE GENOMIC DNA]</scope>
    <source>
        <strain>SC5314 / ATCC MYA-2876</strain>
    </source>
</reference>
<reference key="2">
    <citation type="journal article" date="2007" name="Genome Biol.">
        <title>Assembly of the Candida albicans genome into sixteen supercontigs aligned on the eight chromosomes.</title>
        <authorList>
            <person name="van het Hoog M."/>
            <person name="Rast T.J."/>
            <person name="Martchenko M."/>
            <person name="Grindle S."/>
            <person name="Dignard D."/>
            <person name="Hogues H."/>
            <person name="Cuomo C."/>
            <person name="Berriman M."/>
            <person name="Scherer S."/>
            <person name="Magee B.B."/>
            <person name="Whiteway M."/>
            <person name="Chibana H."/>
            <person name="Nantel A."/>
            <person name="Magee P.T."/>
        </authorList>
    </citation>
    <scope>GENOME REANNOTATION</scope>
    <source>
        <strain>SC5314 / ATCC MYA-2876</strain>
    </source>
</reference>
<reference key="3">
    <citation type="journal article" date="2013" name="Genome Biol.">
        <title>Assembly of a phased diploid Candida albicans genome facilitates allele-specific measurements and provides a simple model for repeat and indel structure.</title>
        <authorList>
            <person name="Muzzey D."/>
            <person name="Schwartz K."/>
            <person name="Weissman J.S."/>
            <person name="Sherlock G."/>
        </authorList>
    </citation>
    <scope>NUCLEOTIDE SEQUENCE [LARGE SCALE GENOMIC DNA]</scope>
    <scope>GENOME REANNOTATION</scope>
    <source>
        <strain>SC5314 / ATCC MYA-2876</strain>
    </source>
</reference>
<reference key="4">
    <citation type="journal article" date="2004" name="Mol. Biol. Cell">
        <title>Transcription profiling of cyclic AMP signaling in Candida albicans.</title>
        <authorList>
            <person name="Harcus D."/>
            <person name="Nantel A."/>
            <person name="Marcil A."/>
            <person name="Rigby T."/>
            <person name="Whiteway M."/>
        </authorList>
    </citation>
    <scope>INDUCTION</scope>
</reference>
<reference key="5">
    <citation type="journal article" date="2005" name="Mol. Biol. Cell">
        <title>Induction of the Candida albicans filamentous growth program by relief of transcriptional repression: a genome-wide analysis.</title>
        <authorList>
            <person name="Kadosh D."/>
            <person name="Johnson A.D."/>
        </authorList>
    </citation>
    <scope>INDUCTION</scope>
</reference>
<reference key="6">
    <citation type="journal article" date="2011" name="J. Biol. Chem.">
        <title>Cap2-HAP complex is a critical transcriptional regulator that has dual but contrasting roles in regulation of iron homeostasis in Candida albicans.</title>
        <authorList>
            <person name="Singh R.P."/>
            <person name="Prasad H.K."/>
            <person name="Sinha I."/>
            <person name="Agarwal N."/>
            <person name="Natarajan K."/>
        </authorList>
    </citation>
    <scope>INDUCTION</scope>
</reference>
<reference key="7">
    <citation type="journal article" date="2012" name="Cell">
        <title>A recently evolved transcriptional network controls biofilm development in Candida albicans.</title>
        <authorList>
            <person name="Nobile C.J."/>
            <person name="Fox E.P."/>
            <person name="Nett J.E."/>
            <person name="Sorrells T.R."/>
            <person name="Mitrovich Q.M."/>
            <person name="Hernday A.D."/>
            <person name="Tuch B.B."/>
            <person name="Andes D.R."/>
            <person name="Johnson A.D."/>
        </authorList>
    </citation>
    <scope>INDUCTION</scope>
</reference>
<reference key="8">
    <citation type="journal article" date="2015" name="PLoS Pathog.">
        <title>Flavodoxin-Like Proteins Protect Candida albicans from Oxidative Stress and Promote Virulence.</title>
        <authorList>
            <person name="Li L."/>
            <person name="Naseem S."/>
            <person name="Sharma S."/>
            <person name="Konopka J.B."/>
        </authorList>
    </citation>
    <scope>FUNCTION</scope>
    <scope>DISRUPTION PHENOTYPE</scope>
    <scope>SUBCELLULAR LOCATION</scope>
</reference>